<sequence>MSRVSQARNLGKYFLLIDNMLVVLGFFVVFPLISIRFVDQMGWAAVMVGIALGLRQFIQQGLGIFGGAIADRFGAKPMIVTGMLMRAAGFATMGIAHEPWLLWFSCLLSGLGGTLFDPPRSALVVKLIRPQQRGRFFSLLMMQDSAGAVIGALLGSWLLQYDFRLVCATGAVLFVLCAAFNAWLLPAWKLSTVRTPVREGMTRVMRDKRFVTYVLTLAGYYMLAVQVMLMLPIMVNDVAGAPSAVKWMYAIEACLSLTLLYPIARWSEKHFRLEHRLMAGLLIMSLSMMPVGMVSGLQQLFTLICLFYIGSIIAEPARETLSASLADARARGSYMGFSRLGLAIGGAIGYIGGGWLFDLGKSAHQPELPWMMLGIIGIFTFLALGWQFSQKRAARRLLERDA</sequence>
<keyword id="KW-0997">Cell inner membrane</keyword>
<keyword id="KW-1003">Cell membrane</keyword>
<keyword id="KW-0472">Membrane</keyword>
<keyword id="KW-1185">Reference proteome</keyword>
<keyword id="KW-0812">Transmembrane</keyword>
<keyword id="KW-1133">Transmembrane helix</keyword>
<keyword id="KW-0813">Transport</keyword>
<proteinExistence type="inferred from homology"/>
<accession>B2TTK5</accession>
<organism>
    <name type="scientific">Shigella boydii serotype 18 (strain CDC 3083-94 / BS512)</name>
    <dbReference type="NCBI Taxonomy" id="344609"/>
    <lineage>
        <taxon>Bacteria</taxon>
        <taxon>Pseudomonadati</taxon>
        <taxon>Pseudomonadota</taxon>
        <taxon>Gammaproteobacteria</taxon>
        <taxon>Enterobacterales</taxon>
        <taxon>Enterobacteriaceae</taxon>
        <taxon>Shigella</taxon>
    </lineage>
</organism>
<name>MDTH_SHIB3</name>
<gene>
    <name evidence="1" type="primary">mdtH</name>
    <name type="ordered locus">SbBS512_E2261</name>
</gene>
<reference key="1">
    <citation type="submission" date="2008-05" db="EMBL/GenBank/DDBJ databases">
        <title>Complete sequence of Shigella boydii serotype 18 strain BS512.</title>
        <authorList>
            <person name="Rasko D.A."/>
            <person name="Rosovitz M."/>
            <person name="Maurelli A.T."/>
            <person name="Myers G."/>
            <person name="Seshadri R."/>
            <person name="Cer R."/>
            <person name="Jiang L."/>
            <person name="Ravel J."/>
            <person name="Sebastian Y."/>
        </authorList>
    </citation>
    <scope>NUCLEOTIDE SEQUENCE [LARGE SCALE GENOMIC DNA]</scope>
    <source>
        <strain>CDC 3083-94 / BS512</strain>
    </source>
</reference>
<comment type="subcellular location">
    <subcellularLocation>
        <location evidence="1">Cell inner membrane</location>
        <topology evidence="1">Multi-pass membrane protein</topology>
    </subcellularLocation>
</comment>
<comment type="similarity">
    <text evidence="1">Belongs to the major facilitator superfamily. DHA1 family. MdtH (TC 2.A.1.2.21) subfamily.</text>
</comment>
<dbReference type="EMBL" id="CP001063">
    <property type="protein sequence ID" value="ACD09471.1"/>
    <property type="molecule type" value="Genomic_DNA"/>
</dbReference>
<dbReference type="RefSeq" id="WP_000092206.1">
    <property type="nucleotide sequence ID" value="NC_010658.1"/>
</dbReference>
<dbReference type="SMR" id="B2TTK5"/>
<dbReference type="STRING" id="344609.SbBS512_E2261"/>
<dbReference type="CARD" id="ARO:3001216">
    <property type="molecule name" value="mdtH"/>
    <property type="mechanism identifier" value="ARO:0010000"/>
    <property type="mechanism name" value="antibiotic efflux"/>
</dbReference>
<dbReference type="GeneID" id="75203652"/>
<dbReference type="KEGG" id="sbc:SbBS512_E2261"/>
<dbReference type="HOGENOM" id="CLU_001265_60_2_6"/>
<dbReference type="Proteomes" id="UP000001030">
    <property type="component" value="Chromosome"/>
</dbReference>
<dbReference type="GO" id="GO:0005886">
    <property type="term" value="C:plasma membrane"/>
    <property type="evidence" value="ECO:0007669"/>
    <property type="project" value="UniProtKB-SubCell"/>
</dbReference>
<dbReference type="GO" id="GO:0022857">
    <property type="term" value="F:transmembrane transporter activity"/>
    <property type="evidence" value="ECO:0007669"/>
    <property type="project" value="UniProtKB-UniRule"/>
</dbReference>
<dbReference type="CDD" id="cd17329">
    <property type="entry name" value="MFS_MdtH_MDR_like"/>
    <property type="match status" value="1"/>
</dbReference>
<dbReference type="FunFam" id="1.20.1250.20:FF:000039">
    <property type="entry name" value="Multidrug resistance protein MdtH"/>
    <property type="match status" value="1"/>
</dbReference>
<dbReference type="Gene3D" id="1.20.1250.20">
    <property type="entry name" value="MFS general substrate transporter like domains"/>
    <property type="match status" value="1"/>
</dbReference>
<dbReference type="HAMAP" id="MF_01529">
    <property type="entry name" value="MFS_MdtH"/>
    <property type="match status" value="1"/>
</dbReference>
<dbReference type="InterPro" id="IPR011701">
    <property type="entry name" value="MFS"/>
</dbReference>
<dbReference type="InterPro" id="IPR020846">
    <property type="entry name" value="MFS_dom"/>
</dbReference>
<dbReference type="InterPro" id="IPR036259">
    <property type="entry name" value="MFS_trans_sf"/>
</dbReference>
<dbReference type="InterPro" id="IPR050171">
    <property type="entry name" value="MFS_Transporters"/>
</dbReference>
<dbReference type="InterPro" id="IPR022855">
    <property type="entry name" value="Multidrug-R_MdtH"/>
</dbReference>
<dbReference type="NCBIfam" id="NF008650">
    <property type="entry name" value="PRK11646.1"/>
    <property type="match status" value="1"/>
</dbReference>
<dbReference type="PANTHER" id="PTHR23517:SF2">
    <property type="entry name" value="MULTIDRUG RESISTANCE PROTEIN MDTH"/>
    <property type="match status" value="1"/>
</dbReference>
<dbReference type="PANTHER" id="PTHR23517">
    <property type="entry name" value="RESISTANCE PROTEIN MDTM, PUTATIVE-RELATED-RELATED"/>
    <property type="match status" value="1"/>
</dbReference>
<dbReference type="Pfam" id="PF07690">
    <property type="entry name" value="MFS_1"/>
    <property type="match status" value="1"/>
</dbReference>
<dbReference type="SUPFAM" id="SSF103473">
    <property type="entry name" value="MFS general substrate transporter"/>
    <property type="match status" value="1"/>
</dbReference>
<dbReference type="PROSITE" id="PS50850">
    <property type="entry name" value="MFS"/>
    <property type="match status" value="1"/>
</dbReference>
<feature type="chain" id="PRO_1000200812" description="Multidrug resistance protein MdtH">
    <location>
        <begin position="1"/>
        <end position="402"/>
    </location>
</feature>
<feature type="topological domain" description="Cytoplasmic" evidence="1">
    <location>
        <begin position="1"/>
        <end position="12"/>
    </location>
</feature>
<feature type="transmembrane region" description="Helical" evidence="1">
    <location>
        <begin position="13"/>
        <end position="33"/>
    </location>
</feature>
<feature type="topological domain" description="Periplasmic" evidence="1">
    <location>
        <begin position="34"/>
        <end position="98"/>
    </location>
</feature>
<feature type="transmembrane region" description="Helical" evidence="1">
    <location>
        <begin position="99"/>
        <end position="116"/>
    </location>
</feature>
<feature type="topological domain" description="Cytoplasmic" evidence="1">
    <location>
        <begin position="117"/>
        <end position="138"/>
    </location>
</feature>
<feature type="transmembrane region" description="Helical" evidence="1">
    <location>
        <begin position="139"/>
        <end position="159"/>
    </location>
</feature>
<feature type="topological domain" description="Periplasmic" evidence="1">
    <location>
        <begin position="160"/>
        <end position="164"/>
    </location>
</feature>
<feature type="transmembrane region" description="Helical" evidence="1">
    <location>
        <begin position="165"/>
        <end position="185"/>
    </location>
</feature>
<feature type="topological domain" description="Cytoplasmic" evidence="1">
    <location>
        <begin position="186"/>
        <end position="213"/>
    </location>
</feature>
<feature type="transmembrane region" description="Helical" evidence="1">
    <location>
        <begin position="214"/>
        <end position="234"/>
    </location>
</feature>
<feature type="topological domain" description="Periplasmic" evidence="1">
    <location>
        <begin position="235"/>
        <end position="243"/>
    </location>
</feature>
<feature type="transmembrane region" description="Helical" evidence="1">
    <location>
        <begin position="244"/>
        <end position="264"/>
    </location>
</feature>
<feature type="topological domain" description="Cytoplasmic" evidence="1">
    <location>
        <begin position="265"/>
        <end position="276"/>
    </location>
</feature>
<feature type="transmembrane region" description="Helical" evidence="1">
    <location>
        <begin position="277"/>
        <end position="297"/>
    </location>
</feature>
<feature type="topological domain" description="Periplasmic" evidence="1">
    <location>
        <begin position="298"/>
        <end position="299"/>
    </location>
</feature>
<feature type="transmembrane region" description="Helical" evidence="1">
    <location>
        <begin position="300"/>
        <end position="320"/>
    </location>
</feature>
<feature type="topological domain" description="Cytoplasmic" evidence="1">
    <location>
        <begin position="321"/>
        <end position="339"/>
    </location>
</feature>
<feature type="transmembrane region" description="Helical" evidence="1">
    <location>
        <begin position="340"/>
        <end position="360"/>
    </location>
</feature>
<feature type="topological domain" description="Periplasmic" evidence="1">
    <location>
        <begin position="361"/>
        <end position="367"/>
    </location>
</feature>
<feature type="transmembrane region" description="Helical" evidence="1">
    <location>
        <begin position="368"/>
        <end position="388"/>
    </location>
</feature>
<feature type="topological domain" description="Cytoplasmic" evidence="1">
    <location>
        <begin position="389"/>
        <end position="402"/>
    </location>
</feature>
<evidence type="ECO:0000255" key="1">
    <source>
        <dbReference type="HAMAP-Rule" id="MF_01529"/>
    </source>
</evidence>
<protein>
    <recommendedName>
        <fullName evidence="1">Multidrug resistance protein MdtH</fullName>
    </recommendedName>
</protein>